<sequence length="431" mass="48989">METISIINAADHVNEQVKIGVWLSNKRSSGKIAFLQLRDGTATFQGVALKNELGETAFAQLTDLAQETSLWVTGTIHADTRSPFGYELAISQFEVVGTSHDYPITPKDHGIDFLLDHRHLWLRSSRPNAIMRIRNEVIRAVYEFFNDRGFIKIDAPILTGSAPEGTTELFKTDYFGQDAYLSQSGQLYGEAGAMAFGKIFTFGPTFRAEKSKTRRHLTEFWQLEPEMAWMHQDESLEVQEQLVAYLGQAVIDHCPHELAVLDRDVATLQKYTKLPFPRVSYDDAITLLQANGFDVDWGVDFGSPEETFLAEHFDQPVFVLNYPKAIKAFYMQAHPTRDDVVIAADLLAPEGYGEIIGGSERSTDYDYLKERLLASGQDLQDYEWYLDLRKYGSVPHSGFGMGLERFLAWITLQDHVRETIPFPRMLHRIYP</sequence>
<protein>
    <recommendedName>
        <fullName>Asparagine--tRNA ligase 1</fullName>
        <ecNumber>6.1.1.22</ecNumber>
    </recommendedName>
    <alternativeName>
        <fullName>Asparaginyl-tRNA synthetase 1</fullName>
        <shortName>AsnRS 1</shortName>
    </alternativeName>
</protein>
<keyword id="KW-0030">Aminoacyl-tRNA synthetase</keyword>
<keyword id="KW-0067">ATP-binding</keyword>
<keyword id="KW-0963">Cytoplasm</keyword>
<keyword id="KW-0436">Ligase</keyword>
<keyword id="KW-0547">Nucleotide-binding</keyword>
<keyword id="KW-0648">Protein biosynthesis</keyword>
<keyword id="KW-1185">Reference proteome</keyword>
<comment type="catalytic activity">
    <reaction>
        <text>tRNA(Asn) + L-asparagine + ATP = L-asparaginyl-tRNA(Asn) + AMP + diphosphate + H(+)</text>
        <dbReference type="Rhea" id="RHEA:11180"/>
        <dbReference type="Rhea" id="RHEA-COMP:9659"/>
        <dbReference type="Rhea" id="RHEA-COMP:9674"/>
        <dbReference type="ChEBI" id="CHEBI:15378"/>
        <dbReference type="ChEBI" id="CHEBI:30616"/>
        <dbReference type="ChEBI" id="CHEBI:33019"/>
        <dbReference type="ChEBI" id="CHEBI:58048"/>
        <dbReference type="ChEBI" id="CHEBI:78442"/>
        <dbReference type="ChEBI" id="CHEBI:78515"/>
        <dbReference type="ChEBI" id="CHEBI:456215"/>
        <dbReference type="EC" id="6.1.1.22"/>
    </reaction>
</comment>
<comment type="subunit">
    <text evidence="1">Homodimer.</text>
</comment>
<comment type="subcellular location">
    <subcellularLocation>
        <location evidence="1">Cytoplasm</location>
    </subcellularLocation>
</comment>
<comment type="similarity">
    <text evidence="2">Belongs to the class-II aminoacyl-tRNA synthetase family.</text>
</comment>
<accession>Q88Y40</accession>
<accession>F9UMF1</accession>
<feature type="chain" id="PRO_0000176418" description="Asparagine--tRNA ligase 1">
    <location>
        <begin position="1"/>
        <end position="431"/>
    </location>
</feature>
<evidence type="ECO:0000250" key="1"/>
<evidence type="ECO:0000305" key="2"/>
<gene>
    <name type="primary">asnS1</name>
    <name type="ordered locus">lp_0956</name>
</gene>
<proteinExistence type="inferred from homology"/>
<name>SYN1_LACPL</name>
<organism>
    <name type="scientific">Lactiplantibacillus plantarum (strain ATCC BAA-793 / NCIMB 8826 / WCFS1)</name>
    <name type="common">Lactobacillus plantarum</name>
    <dbReference type="NCBI Taxonomy" id="220668"/>
    <lineage>
        <taxon>Bacteria</taxon>
        <taxon>Bacillati</taxon>
        <taxon>Bacillota</taxon>
        <taxon>Bacilli</taxon>
        <taxon>Lactobacillales</taxon>
        <taxon>Lactobacillaceae</taxon>
        <taxon>Lactiplantibacillus</taxon>
    </lineage>
</organism>
<reference key="1">
    <citation type="journal article" date="2003" name="Proc. Natl. Acad. Sci. U.S.A.">
        <title>Complete genome sequence of Lactobacillus plantarum WCFS1.</title>
        <authorList>
            <person name="Kleerebezem M."/>
            <person name="Boekhorst J."/>
            <person name="van Kranenburg R."/>
            <person name="Molenaar D."/>
            <person name="Kuipers O.P."/>
            <person name="Leer R."/>
            <person name="Tarchini R."/>
            <person name="Peters S.A."/>
            <person name="Sandbrink H.M."/>
            <person name="Fiers M.W.E.J."/>
            <person name="Stiekema W."/>
            <person name="Klein Lankhorst R.M."/>
            <person name="Bron P.A."/>
            <person name="Hoffer S.M."/>
            <person name="Nierop Groot M.N."/>
            <person name="Kerkhoven R."/>
            <person name="De Vries M."/>
            <person name="Ursing B."/>
            <person name="De Vos W.M."/>
            <person name="Siezen R.J."/>
        </authorList>
    </citation>
    <scope>NUCLEOTIDE SEQUENCE [LARGE SCALE GENOMIC DNA]</scope>
    <source>
        <strain>ATCC BAA-793 / NCIMB 8826 / WCFS1</strain>
    </source>
</reference>
<reference key="2">
    <citation type="journal article" date="2012" name="J. Bacteriol.">
        <title>Complete resequencing and reannotation of the Lactobacillus plantarum WCFS1 genome.</title>
        <authorList>
            <person name="Siezen R.J."/>
            <person name="Francke C."/>
            <person name="Renckens B."/>
            <person name="Boekhorst J."/>
            <person name="Wels M."/>
            <person name="Kleerebezem M."/>
            <person name="van Hijum S.A."/>
        </authorList>
    </citation>
    <scope>NUCLEOTIDE SEQUENCE [LARGE SCALE GENOMIC DNA]</scope>
    <scope>GENOME REANNOTATION</scope>
    <source>
        <strain>ATCC BAA-793 / NCIMB 8826 / WCFS1</strain>
    </source>
</reference>
<dbReference type="EC" id="6.1.1.22"/>
<dbReference type="EMBL" id="AL935263">
    <property type="protein sequence ID" value="CCC78390.1"/>
    <property type="molecule type" value="Genomic_DNA"/>
</dbReference>
<dbReference type="RefSeq" id="WP_011101226.1">
    <property type="nucleotide sequence ID" value="NC_004567.2"/>
</dbReference>
<dbReference type="RefSeq" id="YP_004888904.1">
    <property type="nucleotide sequence ID" value="NC_004567.2"/>
</dbReference>
<dbReference type="SMR" id="Q88Y40"/>
<dbReference type="STRING" id="220668.lp_0956"/>
<dbReference type="EnsemblBacteria" id="CCC78390">
    <property type="protein sequence ID" value="CCC78390"/>
    <property type="gene ID" value="lp_0956"/>
</dbReference>
<dbReference type="KEGG" id="lpl:lp_0956"/>
<dbReference type="PATRIC" id="fig|220668.9.peg.813"/>
<dbReference type="eggNOG" id="COG0017">
    <property type="taxonomic scope" value="Bacteria"/>
</dbReference>
<dbReference type="HOGENOM" id="CLU_004553_2_0_9"/>
<dbReference type="OrthoDB" id="9762036at2"/>
<dbReference type="PhylomeDB" id="Q88Y40"/>
<dbReference type="Proteomes" id="UP000000432">
    <property type="component" value="Chromosome"/>
</dbReference>
<dbReference type="GO" id="GO:0005737">
    <property type="term" value="C:cytoplasm"/>
    <property type="evidence" value="ECO:0007669"/>
    <property type="project" value="UniProtKB-SubCell"/>
</dbReference>
<dbReference type="GO" id="GO:0004816">
    <property type="term" value="F:asparagine-tRNA ligase activity"/>
    <property type="evidence" value="ECO:0007669"/>
    <property type="project" value="UniProtKB-UniRule"/>
</dbReference>
<dbReference type="GO" id="GO:0005524">
    <property type="term" value="F:ATP binding"/>
    <property type="evidence" value="ECO:0007669"/>
    <property type="project" value="UniProtKB-UniRule"/>
</dbReference>
<dbReference type="GO" id="GO:0140096">
    <property type="term" value="F:catalytic activity, acting on a protein"/>
    <property type="evidence" value="ECO:0007669"/>
    <property type="project" value="UniProtKB-ARBA"/>
</dbReference>
<dbReference type="GO" id="GO:0003676">
    <property type="term" value="F:nucleic acid binding"/>
    <property type="evidence" value="ECO:0007669"/>
    <property type="project" value="InterPro"/>
</dbReference>
<dbReference type="GO" id="GO:0016740">
    <property type="term" value="F:transferase activity"/>
    <property type="evidence" value="ECO:0007669"/>
    <property type="project" value="UniProtKB-ARBA"/>
</dbReference>
<dbReference type="GO" id="GO:0006421">
    <property type="term" value="P:asparaginyl-tRNA aminoacylation"/>
    <property type="evidence" value="ECO:0007669"/>
    <property type="project" value="UniProtKB-UniRule"/>
</dbReference>
<dbReference type="CDD" id="cd04323">
    <property type="entry name" value="AsnRS_cyto_like_N"/>
    <property type="match status" value="1"/>
</dbReference>
<dbReference type="CDD" id="cd00776">
    <property type="entry name" value="AsxRS_core"/>
    <property type="match status" value="1"/>
</dbReference>
<dbReference type="Gene3D" id="3.30.930.10">
    <property type="entry name" value="Bira Bifunctional Protein, Domain 2"/>
    <property type="match status" value="1"/>
</dbReference>
<dbReference type="Gene3D" id="2.40.50.140">
    <property type="entry name" value="Nucleic acid-binding proteins"/>
    <property type="match status" value="1"/>
</dbReference>
<dbReference type="HAMAP" id="MF_00534">
    <property type="entry name" value="Asn_tRNA_synth"/>
    <property type="match status" value="1"/>
</dbReference>
<dbReference type="InterPro" id="IPR004364">
    <property type="entry name" value="Aa-tRNA-synt_II"/>
</dbReference>
<dbReference type="InterPro" id="IPR006195">
    <property type="entry name" value="aa-tRNA-synth_II"/>
</dbReference>
<dbReference type="InterPro" id="IPR045864">
    <property type="entry name" value="aa-tRNA-synth_II/BPL/LPL"/>
</dbReference>
<dbReference type="InterPro" id="IPR004522">
    <property type="entry name" value="Asn-tRNA-ligase"/>
</dbReference>
<dbReference type="InterPro" id="IPR002312">
    <property type="entry name" value="Asp/Asn-tRNA-synth_IIb"/>
</dbReference>
<dbReference type="InterPro" id="IPR012340">
    <property type="entry name" value="NA-bd_OB-fold"/>
</dbReference>
<dbReference type="InterPro" id="IPR004365">
    <property type="entry name" value="NA-bd_OB_tRNA"/>
</dbReference>
<dbReference type="NCBIfam" id="TIGR00457">
    <property type="entry name" value="asnS"/>
    <property type="match status" value="1"/>
</dbReference>
<dbReference type="NCBIfam" id="NF003037">
    <property type="entry name" value="PRK03932.1"/>
    <property type="match status" value="1"/>
</dbReference>
<dbReference type="PANTHER" id="PTHR22594:SF34">
    <property type="entry name" value="ASPARAGINE--TRNA LIGASE, MITOCHONDRIAL-RELATED"/>
    <property type="match status" value="1"/>
</dbReference>
<dbReference type="PANTHER" id="PTHR22594">
    <property type="entry name" value="ASPARTYL/LYSYL-TRNA SYNTHETASE"/>
    <property type="match status" value="1"/>
</dbReference>
<dbReference type="Pfam" id="PF00152">
    <property type="entry name" value="tRNA-synt_2"/>
    <property type="match status" value="1"/>
</dbReference>
<dbReference type="Pfam" id="PF01336">
    <property type="entry name" value="tRNA_anti-codon"/>
    <property type="match status" value="1"/>
</dbReference>
<dbReference type="PRINTS" id="PR01042">
    <property type="entry name" value="TRNASYNTHASP"/>
</dbReference>
<dbReference type="SUPFAM" id="SSF55681">
    <property type="entry name" value="Class II aaRS and biotin synthetases"/>
    <property type="match status" value="1"/>
</dbReference>
<dbReference type="SUPFAM" id="SSF50249">
    <property type="entry name" value="Nucleic acid-binding proteins"/>
    <property type="match status" value="1"/>
</dbReference>
<dbReference type="PROSITE" id="PS50862">
    <property type="entry name" value="AA_TRNA_LIGASE_II"/>
    <property type="match status" value="1"/>
</dbReference>